<name>VGFR2_DANRE</name>
<gene>
    <name evidence="2" type="primary">kdr</name>
    <name type="synonym">flk1b</name>
    <name type="synonym">kdrb</name>
    <name type="ORF">si:busm1-205d10.1</name>
    <name type="ORF">si:ch211-254j6.1</name>
</gene>
<dbReference type="EC" id="2.7.10.1" evidence="2"/>
<dbReference type="EMBL" id="AY523999">
    <property type="protein sequence ID" value="AAS92270.1"/>
    <property type="molecule type" value="mRNA"/>
</dbReference>
<dbReference type="EMBL" id="DQ026829">
    <property type="protein sequence ID" value="AAY89336.1"/>
    <property type="molecule type" value="mRNA"/>
</dbReference>
<dbReference type="EMBL" id="BX088688">
    <property type="protein sequence ID" value="CAM14201.1"/>
    <property type="molecule type" value="Genomic_DNA"/>
</dbReference>
<dbReference type="EMBL" id="BX511058">
    <property type="protein sequence ID" value="CAM14201.1"/>
    <property type="status" value="JOINED"/>
    <property type="molecule type" value="Genomic_DNA"/>
</dbReference>
<dbReference type="EMBL" id="BX248242">
    <property type="protein sequence ID" value="CAI11526.1"/>
    <property type="molecule type" value="Genomic_DNA"/>
</dbReference>
<dbReference type="EMBL" id="BX511058">
    <property type="protein sequence ID" value="CAH68950.2"/>
    <property type="molecule type" value="Genomic_DNA"/>
</dbReference>
<dbReference type="EMBL" id="BX088688">
    <property type="protein sequence ID" value="CAH68950.2"/>
    <property type="status" value="JOINED"/>
    <property type="molecule type" value="Genomic_DNA"/>
</dbReference>
<dbReference type="EMBL" id="BC163563">
    <property type="protein sequence ID" value="AAI63563.1"/>
    <property type="molecule type" value="mRNA"/>
</dbReference>
<dbReference type="EMBL" id="AY833405">
    <property type="protein sequence ID" value="AAV93319.1"/>
    <property type="molecule type" value="mRNA"/>
</dbReference>
<dbReference type="RefSeq" id="NP_001019824.2">
    <property type="nucleotide sequence ID" value="NM_001024653.2"/>
</dbReference>
<dbReference type="SMR" id="Q5GIT4"/>
<dbReference type="FunCoup" id="Q5GIT4">
    <property type="interactions" value="1609"/>
</dbReference>
<dbReference type="STRING" id="7955.ENSDARP00000049203"/>
<dbReference type="BindingDB" id="Q5GIT4"/>
<dbReference type="ChEMBL" id="CHEMBL2331049"/>
<dbReference type="DrugCentral" id="Q5GIT4"/>
<dbReference type="GlyCosmos" id="Q5GIT4">
    <property type="glycosylation" value="19 sites, No reported glycans"/>
</dbReference>
<dbReference type="PaxDb" id="7955-ENSDARP00000049203"/>
<dbReference type="Ensembl" id="ENSDART00000049204">
    <property type="protein sequence ID" value="ENSDARP00000049203"/>
    <property type="gene ID" value="ENSDARG00000017321"/>
</dbReference>
<dbReference type="GeneID" id="554230"/>
<dbReference type="KEGG" id="dre:554230"/>
<dbReference type="AGR" id="ZFIN:ZDB-GENE-041001-112"/>
<dbReference type="CTD" id="3791"/>
<dbReference type="ZFIN" id="ZDB-GENE-041001-112">
    <property type="gene designation" value="kdr"/>
</dbReference>
<dbReference type="eggNOG" id="KOG0200">
    <property type="taxonomic scope" value="Eukaryota"/>
</dbReference>
<dbReference type="HOGENOM" id="CLU_000288_49_4_1"/>
<dbReference type="InParanoid" id="Q5GIT4"/>
<dbReference type="OMA" id="FYRDTDM"/>
<dbReference type="OrthoDB" id="9873386at2759"/>
<dbReference type="PhylomeDB" id="Q5GIT4"/>
<dbReference type="TreeFam" id="TF325768"/>
<dbReference type="Reactome" id="R-DRE-194306">
    <property type="pathway name" value="Neurophilin interactions with VEGF and VEGFR"/>
</dbReference>
<dbReference type="Reactome" id="R-DRE-195399">
    <property type="pathway name" value="VEGF binds to VEGFR leading to receptor dimerization"/>
</dbReference>
<dbReference type="Reactome" id="R-DRE-4420097">
    <property type="pathway name" value="VEGFA-VEGFR2 Pathway"/>
</dbReference>
<dbReference type="Reactome" id="R-DRE-5218921">
    <property type="pathway name" value="VEGFR2 mediated cell proliferation"/>
</dbReference>
<dbReference type="PRO" id="PR:Q5GIT4"/>
<dbReference type="Proteomes" id="UP000000437">
    <property type="component" value="Chromosome 20"/>
</dbReference>
<dbReference type="Bgee" id="ENSDARG00000017321">
    <property type="expression patterns" value="Expressed in heart and 37 other cell types or tissues"/>
</dbReference>
<dbReference type="GO" id="GO:0070161">
    <property type="term" value="C:anchoring junction"/>
    <property type="evidence" value="ECO:0007669"/>
    <property type="project" value="UniProtKB-SubCell"/>
</dbReference>
<dbReference type="GO" id="GO:0005769">
    <property type="term" value="C:early endosome"/>
    <property type="evidence" value="ECO:0007669"/>
    <property type="project" value="UniProtKB-SubCell"/>
</dbReference>
<dbReference type="GO" id="GO:0005783">
    <property type="term" value="C:endoplasmic reticulum"/>
    <property type="evidence" value="ECO:0000250"/>
    <property type="project" value="UniProtKB"/>
</dbReference>
<dbReference type="GO" id="GO:0005634">
    <property type="term" value="C:nucleus"/>
    <property type="evidence" value="ECO:0007669"/>
    <property type="project" value="UniProtKB-SubCell"/>
</dbReference>
<dbReference type="GO" id="GO:0005886">
    <property type="term" value="C:plasma membrane"/>
    <property type="evidence" value="ECO:0000318"/>
    <property type="project" value="GO_Central"/>
</dbReference>
<dbReference type="GO" id="GO:0043235">
    <property type="term" value="C:receptor complex"/>
    <property type="evidence" value="ECO:0000318"/>
    <property type="project" value="GO_Central"/>
</dbReference>
<dbReference type="GO" id="GO:0005524">
    <property type="term" value="F:ATP binding"/>
    <property type="evidence" value="ECO:0007669"/>
    <property type="project" value="UniProtKB-KW"/>
</dbReference>
<dbReference type="GO" id="GO:0019838">
    <property type="term" value="F:growth factor binding"/>
    <property type="evidence" value="ECO:0000318"/>
    <property type="project" value="GO_Central"/>
</dbReference>
<dbReference type="GO" id="GO:0005021">
    <property type="term" value="F:vascular endothelial growth factor receptor activity"/>
    <property type="evidence" value="ECO:0000318"/>
    <property type="project" value="GO_Central"/>
</dbReference>
<dbReference type="GO" id="GO:0001525">
    <property type="term" value="P:angiogenesis"/>
    <property type="evidence" value="ECO:0000315"/>
    <property type="project" value="ZFIN"/>
</dbReference>
<dbReference type="GO" id="GO:0001568">
    <property type="term" value="P:blood vessel development"/>
    <property type="evidence" value="ECO:0000316"/>
    <property type="project" value="ZFIN"/>
</dbReference>
<dbReference type="GO" id="GO:0016477">
    <property type="term" value="P:cell migration"/>
    <property type="evidence" value="ECO:0000318"/>
    <property type="project" value="GO_Central"/>
</dbReference>
<dbReference type="GO" id="GO:0007169">
    <property type="term" value="P:cell surface receptor protein tyrosine kinase signaling pathway"/>
    <property type="evidence" value="ECO:0000318"/>
    <property type="project" value="GO_Central"/>
</dbReference>
<dbReference type="GO" id="GO:0035924">
    <property type="term" value="P:cellular response to vascular endothelial growth factor stimulus"/>
    <property type="evidence" value="ECO:0000250"/>
    <property type="project" value="UniProtKB"/>
</dbReference>
<dbReference type="GO" id="GO:0045446">
    <property type="term" value="P:endothelial cell differentiation"/>
    <property type="evidence" value="ECO:0000318"/>
    <property type="project" value="GO_Central"/>
</dbReference>
<dbReference type="GO" id="GO:0045766">
    <property type="term" value="P:positive regulation of angiogenesis"/>
    <property type="evidence" value="ECO:0000318"/>
    <property type="project" value="GO_Central"/>
</dbReference>
<dbReference type="GO" id="GO:0030335">
    <property type="term" value="P:positive regulation of cell migration"/>
    <property type="evidence" value="ECO:0000318"/>
    <property type="project" value="GO_Central"/>
</dbReference>
<dbReference type="GO" id="GO:0008284">
    <property type="term" value="P:positive regulation of cell population proliferation"/>
    <property type="evidence" value="ECO:0000318"/>
    <property type="project" value="GO_Central"/>
</dbReference>
<dbReference type="GO" id="GO:0043408">
    <property type="term" value="P:regulation of MAPK cascade"/>
    <property type="evidence" value="ECO:0000318"/>
    <property type="project" value="GO_Central"/>
</dbReference>
<dbReference type="GO" id="GO:0048010">
    <property type="term" value="P:vascular endothelial growth factor receptor signaling pathway"/>
    <property type="evidence" value="ECO:0000250"/>
    <property type="project" value="UniProtKB"/>
</dbReference>
<dbReference type="CDD" id="cd00096">
    <property type="entry name" value="Ig"/>
    <property type="match status" value="1"/>
</dbReference>
<dbReference type="CDD" id="cd05864">
    <property type="entry name" value="IgI_VEGFR-2"/>
    <property type="match status" value="1"/>
</dbReference>
<dbReference type="FunFam" id="2.60.40.10:FF:002214">
    <property type="entry name" value="Kinase insert domain receptor (a type III receptor tyrosine kinase)"/>
    <property type="match status" value="1"/>
</dbReference>
<dbReference type="FunFam" id="2.60.40.10:FF:000606">
    <property type="entry name" value="Vascular endothelial growth factor receptor 1"/>
    <property type="match status" value="1"/>
</dbReference>
<dbReference type="FunFam" id="1.10.510.10:FF:000077">
    <property type="entry name" value="Vascular endothelial growth factor receptor 2"/>
    <property type="match status" value="1"/>
</dbReference>
<dbReference type="FunFam" id="2.60.40.10:FF:003078">
    <property type="entry name" value="Vascular endothelial growth factor receptor 2"/>
    <property type="match status" value="1"/>
</dbReference>
<dbReference type="FunFam" id="3.30.200.20:FF:000041">
    <property type="entry name" value="Vascular endothelial growth factor receptor 2"/>
    <property type="match status" value="1"/>
</dbReference>
<dbReference type="FunFam" id="2.60.40.10:FF:000143">
    <property type="entry name" value="Vascular endothelial growth factor receptor 3"/>
    <property type="match status" value="1"/>
</dbReference>
<dbReference type="FunFam" id="2.60.40.10:FF:000247">
    <property type="entry name" value="Vascular endothelial growth factor receptor 3"/>
    <property type="match status" value="1"/>
</dbReference>
<dbReference type="FunFam" id="2.60.40.10:FF:000411">
    <property type="entry name" value="Vascular endothelial growth factor receptor 3"/>
    <property type="match status" value="1"/>
</dbReference>
<dbReference type="Gene3D" id="2.60.40.10">
    <property type="entry name" value="Immunoglobulins"/>
    <property type="match status" value="7"/>
</dbReference>
<dbReference type="Gene3D" id="3.30.200.20">
    <property type="entry name" value="Phosphorylase Kinase, domain 1"/>
    <property type="match status" value="1"/>
</dbReference>
<dbReference type="Gene3D" id="1.10.510.10">
    <property type="entry name" value="Transferase(Phosphotransferase) domain 1"/>
    <property type="match status" value="1"/>
</dbReference>
<dbReference type="InterPro" id="IPR007110">
    <property type="entry name" value="Ig-like_dom"/>
</dbReference>
<dbReference type="InterPro" id="IPR036179">
    <property type="entry name" value="Ig-like_dom_sf"/>
</dbReference>
<dbReference type="InterPro" id="IPR013783">
    <property type="entry name" value="Ig-like_fold"/>
</dbReference>
<dbReference type="InterPro" id="IPR013098">
    <property type="entry name" value="Ig_I-set"/>
</dbReference>
<dbReference type="InterPro" id="IPR003599">
    <property type="entry name" value="Ig_sub"/>
</dbReference>
<dbReference type="InterPro" id="IPR003598">
    <property type="entry name" value="Ig_sub2"/>
</dbReference>
<dbReference type="InterPro" id="IPR011009">
    <property type="entry name" value="Kinase-like_dom_sf"/>
</dbReference>
<dbReference type="InterPro" id="IPR000719">
    <property type="entry name" value="Prot_kinase_dom"/>
</dbReference>
<dbReference type="InterPro" id="IPR017441">
    <property type="entry name" value="Protein_kinase_ATP_BS"/>
</dbReference>
<dbReference type="InterPro" id="IPR050122">
    <property type="entry name" value="RTK"/>
</dbReference>
<dbReference type="InterPro" id="IPR001245">
    <property type="entry name" value="Ser-Thr/Tyr_kinase_cat_dom"/>
</dbReference>
<dbReference type="InterPro" id="IPR008266">
    <property type="entry name" value="Tyr_kinase_AS"/>
</dbReference>
<dbReference type="InterPro" id="IPR020635">
    <property type="entry name" value="Tyr_kinase_cat_dom"/>
</dbReference>
<dbReference type="InterPro" id="IPR001824">
    <property type="entry name" value="Tyr_kinase_rcpt_3_CS"/>
</dbReference>
<dbReference type="InterPro" id="IPR041348">
    <property type="entry name" value="VEGFR-2_TMD"/>
</dbReference>
<dbReference type="InterPro" id="IPR055238">
    <property type="entry name" value="VEGFR1-3_N_Ig-like"/>
</dbReference>
<dbReference type="PANTHER" id="PTHR24416">
    <property type="entry name" value="TYROSINE-PROTEIN KINASE RECEPTOR"/>
    <property type="match status" value="1"/>
</dbReference>
<dbReference type="PANTHER" id="PTHR24416:SF625">
    <property type="entry name" value="VASCULAR ENDOTHELIAL GROWTH FACTOR RECEPTOR 2"/>
    <property type="match status" value="1"/>
</dbReference>
<dbReference type="Pfam" id="PF07679">
    <property type="entry name" value="I-set"/>
    <property type="match status" value="2"/>
</dbReference>
<dbReference type="Pfam" id="PF13927">
    <property type="entry name" value="Ig_3"/>
    <property type="match status" value="1"/>
</dbReference>
<dbReference type="Pfam" id="PF07714">
    <property type="entry name" value="PK_Tyr_Ser-Thr"/>
    <property type="match status" value="1"/>
</dbReference>
<dbReference type="Pfam" id="PF21339">
    <property type="entry name" value="VEGFR-1-like_Ig-like"/>
    <property type="match status" value="1"/>
</dbReference>
<dbReference type="Pfam" id="PF17988">
    <property type="entry name" value="VEGFR-2_TMD"/>
    <property type="match status" value="1"/>
</dbReference>
<dbReference type="Pfam" id="PF22854">
    <property type="entry name" value="VEGFR1-3_N_Ig-like"/>
    <property type="match status" value="1"/>
</dbReference>
<dbReference type="PIRSF" id="PIRSF000615">
    <property type="entry name" value="TyrPK_CSF1-R"/>
    <property type="match status" value="1"/>
</dbReference>
<dbReference type="PRINTS" id="PR01832">
    <property type="entry name" value="VEGFRECEPTOR"/>
</dbReference>
<dbReference type="PRINTS" id="PR01835">
    <property type="entry name" value="VEGFRECEPTR3"/>
</dbReference>
<dbReference type="SMART" id="SM00409">
    <property type="entry name" value="IG"/>
    <property type="match status" value="7"/>
</dbReference>
<dbReference type="SMART" id="SM00408">
    <property type="entry name" value="IGc2"/>
    <property type="match status" value="4"/>
</dbReference>
<dbReference type="SMART" id="SM00219">
    <property type="entry name" value="TyrKc"/>
    <property type="match status" value="1"/>
</dbReference>
<dbReference type="SUPFAM" id="SSF48726">
    <property type="entry name" value="Immunoglobulin"/>
    <property type="match status" value="7"/>
</dbReference>
<dbReference type="SUPFAM" id="SSF56112">
    <property type="entry name" value="Protein kinase-like (PK-like)"/>
    <property type="match status" value="1"/>
</dbReference>
<dbReference type="PROSITE" id="PS50835">
    <property type="entry name" value="IG_LIKE"/>
    <property type="match status" value="5"/>
</dbReference>
<dbReference type="PROSITE" id="PS00107">
    <property type="entry name" value="PROTEIN_KINASE_ATP"/>
    <property type="match status" value="1"/>
</dbReference>
<dbReference type="PROSITE" id="PS50011">
    <property type="entry name" value="PROTEIN_KINASE_DOM"/>
    <property type="match status" value="1"/>
</dbReference>
<dbReference type="PROSITE" id="PS00109">
    <property type="entry name" value="PROTEIN_KINASE_TYR"/>
    <property type="match status" value="1"/>
</dbReference>
<dbReference type="PROSITE" id="PS00240">
    <property type="entry name" value="RECEPTOR_TYR_KIN_III"/>
    <property type="match status" value="1"/>
</dbReference>
<proteinExistence type="evidence at protein level"/>
<organism>
    <name type="scientific">Danio rerio</name>
    <name type="common">Zebrafish</name>
    <name type="synonym">Brachydanio rerio</name>
    <dbReference type="NCBI Taxonomy" id="7955"/>
    <lineage>
        <taxon>Eukaryota</taxon>
        <taxon>Metazoa</taxon>
        <taxon>Chordata</taxon>
        <taxon>Craniata</taxon>
        <taxon>Vertebrata</taxon>
        <taxon>Euteleostomi</taxon>
        <taxon>Actinopterygii</taxon>
        <taxon>Neopterygii</taxon>
        <taxon>Teleostei</taxon>
        <taxon>Ostariophysi</taxon>
        <taxon>Cypriniformes</taxon>
        <taxon>Danionidae</taxon>
        <taxon>Danioninae</taxon>
        <taxon>Danio</taxon>
    </lineage>
</organism>
<feature type="signal peptide" evidence="3">
    <location>
        <begin position="1"/>
        <end position="22"/>
    </location>
</feature>
<feature type="chain" id="PRO_0000249465" description="Vascular endothelial growth factor receptor 2">
    <location>
        <begin position="23"/>
        <end position="1357"/>
    </location>
</feature>
<feature type="topological domain" description="Extracellular" evidence="3">
    <location>
        <begin position="23"/>
        <end position="774"/>
    </location>
</feature>
<feature type="transmembrane region" description="Helical" evidence="3">
    <location>
        <begin position="775"/>
        <end position="795"/>
    </location>
</feature>
<feature type="topological domain" description="Cytoplasmic" evidence="3">
    <location>
        <begin position="796"/>
        <end position="1357"/>
    </location>
</feature>
<feature type="domain" description="Ig-like C2-type 1">
    <location>
        <begin position="32"/>
        <end position="120"/>
    </location>
</feature>
<feature type="domain" description="Ig-like C2-type 2">
    <location>
        <begin position="120"/>
        <end position="222"/>
    </location>
</feature>
<feature type="domain" description="Ig-like C2-type 3">
    <location>
        <begin position="216"/>
        <end position="330"/>
    </location>
</feature>
<feature type="domain" description="Ig-like C2-type 4">
    <location>
        <begin position="335"/>
        <end position="426"/>
    </location>
</feature>
<feature type="domain" description="Ig-like C2-type 5">
    <location>
        <begin position="433"/>
        <end position="553"/>
    </location>
</feature>
<feature type="domain" description="Ig-like C2-type 6">
    <location>
        <begin position="556"/>
        <end position="667"/>
    </location>
</feature>
<feature type="domain" description="Ig-like C2-type 7">
    <location>
        <begin position="676"/>
        <end position="762"/>
    </location>
</feature>
<feature type="domain" description="Protein kinase" evidence="5">
    <location>
        <begin position="843"/>
        <end position="1173"/>
    </location>
</feature>
<feature type="region of interest" description="Disordered" evidence="7">
    <location>
        <begin position="944"/>
        <end position="975"/>
    </location>
</feature>
<feature type="region of interest" description="Disordered" evidence="7">
    <location>
        <begin position="1296"/>
        <end position="1357"/>
    </location>
</feature>
<feature type="compositionally biased region" description="Polar residues" evidence="7">
    <location>
        <begin position="1298"/>
        <end position="1312"/>
    </location>
</feature>
<feature type="active site" description="Proton acceptor" evidence="5 6">
    <location>
        <position position="1039"/>
    </location>
</feature>
<feature type="binding site" evidence="5">
    <location>
        <begin position="849"/>
        <end position="857"/>
    </location>
    <ligand>
        <name>ATP</name>
        <dbReference type="ChEBI" id="CHEBI:30616"/>
    </ligand>
</feature>
<feature type="binding site" evidence="5">
    <location>
        <position position="877"/>
    </location>
    <ligand>
        <name>ATP</name>
        <dbReference type="ChEBI" id="CHEBI:30616"/>
    </ligand>
</feature>
<feature type="modified residue" description="Phosphotyrosine; by autocatalysis" evidence="1">
    <location>
        <position position="1065"/>
    </location>
</feature>
<feature type="modified residue" description="Phosphotyrosine; by autocatalysis" evidence="1">
    <location>
        <position position="1070"/>
    </location>
</feature>
<feature type="modified residue" description="Phosphotyrosine; by autocatalysis" evidence="1">
    <location>
        <position position="1186"/>
    </location>
</feature>
<feature type="modified residue" description="Phosphotyrosine; by autocatalysis" evidence="1">
    <location>
        <position position="1222"/>
    </location>
</feature>
<feature type="glycosylation site" description="N-linked (GlcNAc...) asparagine" evidence="3">
    <location>
        <position position="35"/>
    </location>
</feature>
<feature type="glycosylation site" description="N-linked (GlcNAc...) asparagine" evidence="3">
    <location>
        <position position="44"/>
    </location>
</feature>
<feature type="glycosylation site" description="N-linked (GlcNAc...) asparagine" evidence="3">
    <location>
        <position position="66"/>
    </location>
</feature>
<feature type="glycosylation site" description="N-linked (GlcNAc...) asparagine" evidence="3">
    <location>
        <position position="97"/>
    </location>
</feature>
<feature type="glycosylation site" description="N-linked (GlcNAc...) asparagine" evidence="3">
    <location>
        <position position="161"/>
    </location>
</feature>
<feature type="glycosylation site" description="N-linked (GlcNAc...) asparagine" evidence="3">
    <location>
        <position position="209"/>
    </location>
</feature>
<feature type="glycosylation site" description="N-linked (GlcNAc...) asparagine" evidence="3">
    <location>
        <position position="247"/>
    </location>
</feature>
<feature type="glycosylation site" description="N-linked (GlcNAc...) asparagine" evidence="3">
    <location>
        <position position="272"/>
    </location>
</feature>
<feature type="glycosylation site" description="N-linked (GlcNAc...) asparagine" evidence="3">
    <location>
        <position position="303"/>
    </location>
</feature>
<feature type="glycosylation site" description="N-linked (GlcNAc...) asparagine" evidence="3">
    <location>
        <position position="307"/>
    </location>
</feature>
<feature type="glycosylation site" description="N-linked (GlcNAc...) asparagine" evidence="3">
    <location>
        <position position="407"/>
    </location>
</feature>
<feature type="glycosylation site" description="N-linked (GlcNAc...) asparagine" evidence="3">
    <location>
        <position position="501"/>
    </location>
</feature>
<feature type="glycosylation site" description="N-linked (GlcNAc...) asparagine" evidence="3">
    <location>
        <position position="560"/>
    </location>
</feature>
<feature type="glycosylation site" description="N-linked (GlcNAc...) asparagine" evidence="3">
    <location>
        <position position="621"/>
    </location>
</feature>
<feature type="glycosylation site" description="N-linked (GlcNAc...) asparagine" evidence="3">
    <location>
        <position position="631"/>
    </location>
</feature>
<feature type="glycosylation site" description="N-linked (GlcNAc...) asparagine" evidence="3">
    <location>
        <position position="640"/>
    </location>
</feature>
<feature type="glycosylation site" description="N-linked (GlcNAc...) asparagine" evidence="3">
    <location>
        <position position="681"/>
    </location>
</feature>
<feature type="glycosylation site" description="N-linked (GlcNAc...) asparagine" evidence="3">
    <location>
        <position position="688"/>
    </location>
</feature>
<feature type="glycosylation site" description="N-linked (GlcNAc...) asparagine" evidence="3">
    <location>
        <position position="713"/>
    </location>
</feature>
<feature type="disulfide bond" evidence="4">
    <location>
        <begin position="53"/>
        <end position="104"/>
    </location>
</feature>
<feature type="disulfide bond" evidence="4">
    <location>
        <begin position="153"/>
        <end position="203"/>
    </location>
</feature>
<feature type="disulfide bond" evidence="4">
    <location>
        <begin position="248"/>
        <end position="314"/>
    </location>
</feature>
<feature type="disulfide bond" evidence="4">
    <location>
        <begin position="457"/>
        <end position="538"/>
    </location>
</feature>
<feature type="disulfide bond" evidence="4">
    <location>
        <begin position="579"/>
        <end position="651"/>
    </location>
</feature>
<feature type="disulfide bond" evidence="4">
    <location>
        <begin position="697"/>
        <end position="746"/>
    </location>
</feature>
<feature type="sequence conflict" description="In Ref. 3; AAI63563." evidence="11" ref="3">
    <original>F</original>
    <variation>V</variation>
    <location>
        <position position="17"/>
    </location>
</feature>
<feature type="sequence conflict" description="In Ref. 3; AAI63563." evidence="11" ref="3">
    <original>T</original>
    <variation>S</variation>
    <location>
        <position position="72"/>
    </location>
</feature>
<feature type="sequence conflict" description="In Ref. 2; AAY89336." evidence="11" ref="2">
    <original>L</original>
    <variation>P</variation>
    <location>
        <position position="109"/>
    </location>
</feature>
<feature type="sequence conflict" description="In Ref. 2; AAY89336." evidence="11" ref="2">
    <original>L</original>
    <variation>R</variation>
    <location>
        <position position="254"/>
    </location>
</feature>
<feature type="sequence conflict" description="In Ref. 3; AAI63563." evidence="11" ref="3">
    <original>W</original>
    <variation>C</variation>
    <location>
        <position position="262"/>
    </location>
</feature>
<feature type="sequence conflict" description="In Ref. 1; AAS92270." evidence="11" ref="1">
    <original>K</original>
    <variation>R</variation>
    <location>
        <position position="287"/>
    </location>
</feature>
<feature type="sequence conflict" description="In Ref. 2; AAY89336." evidence="11" ref="2">
    <original>E</original>
    <variation>G</variation>
    <location>
        <position position="384"/>
    </location>
</feature>
<feature type="sequence conflict" description="In Ref. 2; AAY89336." evidence="11" ref="2">
    <original>A</original>
    <variation>G</variation>
    <location>
        <position position="459"/>
    </location>
</feature>
<feature type="sequence conflict" description="In Ref. 2; AAY89336 and 3; AAI63563." evidence="11" ref="2 3">
    <original>TR</original>
    <variation>PS</variation>
    <location>
        <begin position="488"/>
        <end position="489"/>
    </location>
</feature>
<feature type="sequence conflict" description="In Ref. 1; AAS92270." evidence="11" ref="1">
    <original>F</original>
    <variation>S</variation>
    <location>
        <position position="553"/>
    </location>
</feature>
<feature type="sequence conflict" description="In Ref. 1; AAS92270." evidence="11" ref="1">
    <original>R</original>
    <variation>K</variation>
    <location>
        <position position="958"/>
    </location>
</feature>
<feature type="sequence conflict" description="In Ref. 2; AAY89336, 3; AAI63563 and 5; AAV93319." evidence="11" ref="2 3 5">
    <original>Y</original>
    <variation>S</variation>
    <location>
        <position position="996"/>
    </location>
</feature>
<feature type="sequence conflict" description="In Ref. 2; AAY89336 and 3; AAI63563." evidence="11" ref="2 3">
    <original>K</original>
    <variation>T</variation>
    <location>
        <position position="997"/>
    </location>
</feature>
<feature type="sequence conflict" description="In Ref. 1; AAS92270." evidence="11" ref="1">
    <original>W</original>
    <variation>R</variation>
    <location>
        <position position="1100"/>
    </location>
</feature>
<feature type="sequence conflict" description="In Ref. 2; AAY89336." evidence="11" ref="2">
    <original>D</original>
    <variation>G</variation>
    <location>
        <position position="1223"/>
    </location>
</feature>
<feature type="sequence conflict" description="In Ref. 2; AAY89336 and 3; AAI63563." evidence="11" ref="2 3">
    <original>M</original>
    <variation>I</variation>
    <location>
        <position position="1234"/>
    </location>
</feature>
<accession>Q5GIT4</accession>
<accession>B3DJQ0</accession>
<accession>Q1ANK7</accession>
<accession>Q5MD88</accession>
<accession>Q5RIP2</accession>
<accession>Q5TZ34</accession>
<keyword id="KW-0037">Angiogenesis</keyword>
<keyword id="KW-0067">ATP-binding</keyword>
<keyword id="KW-0965">Cell junction</keyword>
<keyword id="KW-1003">Cell membrane</keyword>
<keyword id="KW-0963">Cytoplasm</keyword>
<keyword id="KW-0968">Cytoplasmic vesicle</keyword>
<keyword id="KW-0217">Developmental protein</keyword>
<keyword id="KW-0221">Differentiation</keyword>
<keyword id="KW-1015">Disulfide bond</keyword>
<keyword id="KW-0256">Endoplasmic reticulum</keyword>
<keyword id="KW-0967">Endosome</keyword>
<keyword id="KW-0325">Glycoprotein</keyword>
<keyword id="KW-0393">Immunoglobulin domain</keyword>
<keyword id="KW-0418">Kinase</keyword>
<keyword id="KW-0472">Membrane</keyword>
<keyword id="KW-0547">Nucleotide-binding</keyword>
<keyword id="KW-0539">Nucleus</keyword>
<keyword id="KW-0597">Phosphoprotein</keyword>
<keyword id="KW-0675">Receptor</keyword>
<keyword id="KW-1185">Reference proteome</keyword>
<keyword id="KW-0677">Repeat</keyword>
<keyword id="KW-0732">Signal</keyword>
<keyword id="KW-0808">Transferase</keyword>
<keyword id="KW-0812">Transmembrane</keyword>
<keyword id="KW-1133">Transmembrane helix</keyword>
<keyword id="KW-0829">Tyrosine-protein kinase</keyword>
<reference key="1">
    <citation type="submission" date="2004-01" db="EMBL/GenBank/DDBJ databases">
        <title>Synergistic signaling of vegf receptors is required for vasculogenesis in zebrafish.</title>
        <authorList>
            <person name="Habeck H."/>
            <person name="Langhoff J."/>
            <person name="Vogel A.M."/>
            <person name="Trowe T."/>
            <person name="Koblizek T.I."/>
            <person name="Schulte-Merker S."/>
        </authorList>
    </citation>
    <scope>NUCLEOTIDE SEQUENCE [MRNA]</scope>
</reference>
<reference key="2">
    <citation type="journal article" date="2007" name="Blood">
        <title>Duplicate VegfA genes and orthologues of the KDR receptor tyrosine kinase family mediate vascular development in the zebrafish.</title>
        <authorList>
            <person name="Bahary N."/>
            <person name="Goishi K."/>
            <person name="Stuckenholz C."/>
            <person name="Weber G."/>
            <person name="Leblanc J."/>
            <person name="Schafer C.A."/>
            <person name="Berman S.S."/>
            <person name="Klagsbrun M."/>
            <person name="Zon L.I."/>
        </authorList>
    </citation>
    <scope>NUCLEOTIDE SEQUENCE [MRNA]</scope>
    <scope>FUNCTION</scope>
    <scope>INTERACTION WITH VEGFAA AND VEGFAB</scope>
    <scope>TISSUE SPECIFICITY</scope>
    <scope>PHOSPHORYLATION</scope>
</reference>
<reference key="3">
    <citation type="journal article" date="2013" name="Nature">
        <title>The zebrafish reference genome sequence and its relationship to the human genome.</title>
        <authorList>
            <person name="Howe K."/>
            <person name="Clark M.D."/>
            <person name="Torroja C.F."/>
            <person name="Torrance J."/>
            <person name="Berthelot C."/>
            <person name="Muffato M."/>
            <person name="Collins J.E."/>
            <person name="Humphray S."/>
            <person name="McLaren K."/>
            <person name="Matthews L."/>
            <person name="McLaren S."/>
            <person name="Sealy I."/>
            <person name="Caccamo M."/>
            <person name="Churcher C."/>
            <person name="Scott C."/>
            <person name="Barrett J.C."/>
            <person name="Koch R."/>
            <person name="Rauch G.J."/>
            <person name="White S."/>
            <person name="Chow W."/>
            <person name="Kilian B."/>
            <person name="Quintais L.T."/>
            <person name="Guerra-Assuncao J.A."/>
            <person name="Zhou Y."/>
            <person name="Gu Y."/>
            <person name="Yen J."/>
            <person name="Vogel J.H."/>
            <person name="Eyre T."/>
            <person name="Redmond S."/>
            <person name="Banerjee R."/>
            <person name="Chi J."/>
            <person name="Fu B."/>
            <person name="Langley E."/>
            <person name="Maguire S.F."/>
            <person name="Laird G.K."/>
            <person name="Lloyd D."/>
            <person name="Kenyon E."/>
            <person name="Donaldson S."/>
            <person name="Sehra H."/>
            <person name="Almeida-King J."/>
            <person name="Loveland J."/>
            <person name="Trevanion S."/>
            <person name="Jones M."/>
            <person name="Quail M."/>
            <person name="Willey D."/>
            <person name="Hunt A."/>
            <person name="Burton J."/>
            <person name="Sims S."/>
            <person name="McLay K."/>
            <person name="Plumb B."/>
            <person name="Davis J."/>
            <person name="Clee C."/>
            <person name="Oliver K."/>
            <person name="Clark R."/>
            <person name="Riddle C."/>
            <person name="Elliot D."/>
            <person name="Threadgold G."/>
            <person name="Harden G."/>
            <person name="Ware D."/>
            <person name="Begum S."/>
            <person name="Mortimore B."/>
            <person name="Kerry G."/>
            <person name="Heath P."/>
            <person name="Phillimore B."/>
            <person name="Tracey A."/>
            <person name="Corby N."/>
            <person name="Dunn M."/>
            <person name="Johnson C."/>
            <person name="Wood J."/>
            <person name="Clark S."/>
            <person name="Pelan S."/>
            <person name="Griffiths G."/>
            <person name="Smith M."/>
            <person name="Glithero R."/>
            <person name="Howden P."/>
            <person name="Barker N."/>
            <person name="Lloyd C."/>
            <person name="Stevens C."/>
            <person name="Harley J."/>
            <person name="Holt K."/>
            <person name="Panagiotidis G."/>
            <person name="Lovell J."/>
            <person name="Beasley H."/>
            <person name="Henderson C."/>
            <person name="Gordon D."/>
            <person name="Auger K."/>
            <person name="Wright D."/>
            <person name="Collins J."/>
            <person name="Raisen C."/>
            <person name="Dyer L."/>
            <person name="Leung K."/>
            <person name="Robertson L."/>
            <person name="Ambridge K."/>
            <person name="Leongamornlert D."/>
            <person name="McGuire S."/>
            <person name="Gilderthorp R."/>
            <person name="Griffiths C."/>
            <person name="Manthravadi D."/>
            <person name="Nichol S."/>
            <person name="Barker G."/>
            <person name="Whitehead S."/>
            <person name="Kay M."/>
            <person name="Brown J."/>
            <person name="Murnane C."/>
            <person name="Gray E."/>
            <person name="Humphries M."/>
            <person name="Sycamore N."/>
            <person name="Barker D."/>
            <person name="Saunders D."/>
            <person name="Wallis J."/>
            <person name="Babbage A."/>
            <person name="Hammond S."/>
            <person name="Mashreghi-Mohammadi M."/>
            <person name="Barr L."/>
            <person name="Martin S."/>
            <person name="Wray P."/>
            <person name="Ellington A."/>
            <person name="Matthews N."/>
            <person name="Ellwood M."/>
            <person name="Woodmansey R."/>
            <person name="Clark G."/>
            <person name="Cooper J."/>
            <person name="Tromans A."/>
            <person name="Grafham D."/>
            <person name="Skuce C."/>
            <person name="Pandian R."/>
            <person name="Andrews R."/>
            <person name="Harrison E."/>
            <person name="Kimberley A."/>
            <person name="Garnett J."/>
            <person name="Fosker N."/>
            <person name="Hall R."/>
            <person name="Garner P."/>
            <person name="Kelly D."/>
            <person name="Bird C."/>
            <person name="Palmer S."/>
            <person name="Gehring I."/>
            <person name="Berger A."/>
            <person name="Dooley C.M."/>
            <person name="Ersan-Urun Z."/>
            <person name="Eser C."/>
            <person name="Geiger H."/>
            <person name="Geisler M."/>
            <person name="Karotki L."/>
            <person name="Kirn A."/>
            <person name="Konantz J."/>
            <person name="Konantz M."/>
            <person name="Oberlander M."/>
            <person name="Rudolph-Geiger S."/>
            <person name="Teucke M."/>
            <person name="Lanz C."/>
            <person name="Raddatz G."/>
            <person name="Osoegawa K."/>
            <person name="Zhu B."/>
            <person name="Rapp A."/>
            <person name="Widaa S."/>
            <person name="Langford C."/>
            <person name="Yang F."/>
            <person name="Schuster S.C."/>
            <person name="Carter N.P."/>
            <person name="Harrow J."/>
            <person name="Ning Z."/>
            <person name="Herrero J."/>
            <person name="Searle S.M."/>
            <person name="Enright A."/>
            <person name="Geisler R."/>
            <person name="Plasterk R.H."/>
            <person name="Lee C."/>
            <person name="Westerfield M."/>
            <person name="de Jong P.J."/>
            <person name="Zon L.I."/>
            <person name="Postlethwait J.H."/>
            <person name="Nusslein-Volhard C."/>
            <person name="Hubbard T.J."/>
            <person name="Roest Crollius H."/>
            <person name="Rogers J."/>
            <person name="Stemple D.L."/>
        </authorList>
    </citation>
    <scope>NUCLEOTIDE SEQUENCE [LARGE SCALE GENOMIC DNA]</scope>
    <source>
        <strain>Tuebingen</strain>
    </source>
</reference>
<reference key="4">
    <citation type="submission" date="2008-04" db="EMBL/GenBank/DDBJ databases">
        <authorList>
            <consortium name="NIH - Zebrafish Gene Collection (ZGC) project"/>
        </authorList>
    </citation>
    <scope>NUCLEOTIDE SEQUENCE [LARGE SCALE MRNA]</scope>
</reference>
<reference key="5">
    <citation type="journal article" date="2006" name="Proc. Natl. Acad. Sci. U.S.A.">
        <title>Distinct genetic interactions between multiple Vegf receptors are required for development of different blood vessel types in zebrafish.</title>
        <authorList>
            <person name="Covassin L.D."/>
            <person name="Villefranc J.A."/>
            <person name="Kacergis M.C."/>
            <person name="Weinstein B.M."/>
            <person name="Lawson N.D."/>
        </authorList>
    </citation>
    <scope>NUCLEOTIDE SEQUENCE [MRNA] OF 687-1144</scope>
    <scope>FUNCTION</scope>
    <scope>TISSUE SPECIFICITY</scope>
</reference>
<reference key="6">
    <citation type="journal article" date="2007" name="PLoS Genet.">
        <title>Early endocardial morphogenesis requires Scl/Tal1.</title>
        <authorList>
            <person name="Bussmann J."/>
            <person name="Bakkers J."/>
            <person name="Schulte-Merker S."/>
        </authorList>
    </citation>
    <scope>TISSUE SPECIFICITY</scope>
    <scope>DEVELOPMENTAL STAGE</scope>
    <scope>ORTHOLOGY</scope>
</reference>
<reference key="7">
    <citation type="journal article" date="2008" name="PLoS Genet.">
        <title>Zebrafish VEGF receptors: a guideline to nomenclature.</title>
        <authorList>
            <person name="Bussmann J."/>
            <person name="Lawson N."/>
            <person name="Zon L."/>
            <person name="Schulte-Merker S."/>
        </authorList>
    </citation>
    <scope>NOMENCLATURE AND ORTHOLOGY</scope>
</reference>
<evidence type="ECO:0000250" key="1"/>
<evidence type="ECO:0000250" key="2">
    <source>
        <dbReference type="UniProtKB" id="P35968"/>
    </source>
</evidence>
<evidence type="ECO:0000255" key="3"/>
<evidence type="ECO:0000255" key="4">
    <source>
        <dbReference type="PROSITE-ProRule" id="PRU00114"/>
    </source>
</evidence>
<evidence type="ECO:0000255" key="5">
    <source>
        <dbReference type="PROSITE-ProRule" id="PRU00159"/>
    </source>
</evidence>
<evidence type="ECO:0000255" key="6">
    <source>
        <dbReference type="PROSITE-ProRule" id="PRU10028"/>
    </source>
</evidence>
<evidence type="ECO:0000256" key="7">
    <source>
        <dbReference type="SAM" id="MobiDB-lite"/>
    </source>
</evidence>
<evidence type="ECO:0000269" key="8">
    <source>
    </source>
</evidence>
<evidence type="ECO:0000269" key="9">
    <source>
    </source>
</evidence>
<evidence type="ECO:0000269" key="10">
    <source>
    </source>
</evidence>
<evidence type="ECO:0000305" key="11"/>
<sequence>MAKTSYALLLLDILLTFNVAKAIELRFVPDPPTLNITEKTIKINASDTLQITCRGRQILEWSTPHNRTSSETRLTISDCSGDGLFCSTLTLSKAVANETGEYRCFYKSLPKEDGKTSVAVYVFIQDYRTPFVRIAQDYDVVFIREGEQVVIPCLVSVEDLNVTLYTKYPVKELSTDGKEVIWDSRRGFILPSRVVSYAGVVYCQTTIRNETFQSSPYIVAVVGYKIYDLTLSPQHERLTVGERLILNCTAHTELNVGIDFQWTFPHEKRSVNGSMSTSRYKTSSNKKKLWNSLELSNTLTVENVTLNDTGEYICTASSGQMQKIAQASLIVYEKPFIALSDQLWQTVEAKAGDAEAKILVKYYAYPEPAVRWYKNDQLIVLRDEYRMKFYRGVHLTIYGVTEKDAGNYTVVMTNKITKEEQRRTFQLVVNDLPRIFEKDVSLDRDVHMYGSSPTLTCTASGGSSPVTIKWQWMPREDCPVRFLPKSDTRMAKCDKWREMSNNTGKNPLISQTSVDERTLKTISTLKIQKAVDHALYRCIATNKMGQDQRVIVFQVTRFLNLSVLPSSSPIEGQDVIMRCVADRLLYYNLRWYRVANVANHDPPPAAVPCDTLTLSHLHQPNVTVSGLQGTNVTLDMPIPNATMMDQGLYACQVEIVGTNEKTCLLHNLRLRALEMSRIVTNLTDQRVNVSDSTTLVCEVSGTPTPTIVWTKDNQTVMEGSGVILKRSNRVLTIQRVKKEDSGLYICTACNQQGCESSEARISVDGAEEKMNVELIMPIGAVVIAMFLWLLIVFVIRNRKRPNDGDLKTGYLSIILDSDDMPMDEHCERLTYDASKWEFPRDRLKLGEPLGRGAFGQVVEATAYGIEKATTCTTVAVKMLKEGATSSEYRALMSELKILIHIGHHLNVVNLLGACTKQGGPLMVIVEYCKHGNLSSYLKSKRGEYSPYKKRTPRMPNRREVQQDEDPREGDLGLGTSTRLDICTGTAVCTRTGEQTYKTLQDEQESSDWDHLTMEDLISYSFQVAKGMEFLASRKCIHRDLAARNILLSENSVVKICDFGLARDVYKDPDYVRKGDARLPLKWMAPETIFDRVYTTQSDVWSFGVLLWEIFSLGASPYPGVCIDESFCRRLKEGTRMRAPDYATPEIYQTMLDCWLDRPLDRPTFTQLVEHLGNLLQASAQQDGKDYIPLTNGEMEEELVAPHLNVTSKRSFYAGNTEAQLHYDNAPPLGFPQQMNSSGVPVNMTGFVDIPLEHTTVMDGHVDCGVGLSREQMKALDRQAQRPLNFSPLLRCKSKESLASESSNQTSGYQSGYHSDDAEAPIYANEEMILKRDIRKKPPLPKRNDKFSAEVRYSAPPV</sequence>
<protein>
    <recommendedName>
        <fullName evidence="2">Vascular endothelial growth factor receptor 2</fullName>
        <shortName>VEGFR-2</shortName>
        <ecNumber evidence="2">2.7.10.1</ecNumber>
    </recommendedName>
    <alternativeName>
        <fullName>Fetal liver kinase 1b</fullName>
        <shortName>FLK-1b</shortName>
    </alternativeName>
    <alternativeName>
        <fullName>Kinase insert domain receptor</fullName>
    </alternativeName>
    <alternativeName>
        <fullName>Kinase insert domain receptor-B</fullName>
    </alternativeName>
    <alternativeName>
        <fullName>Protein-tyrosine kinase receptor flk-1b</fullName>
    </alternativeName>
    <alternativeName>
        <fullName>Vascular endothelial growth factor receptor 2 homolog B</fullName>
        <shortName>VEGFR-2 homolog B</shortName>
    </alternativeName>
</protein>
<comment type="function">
    <text evidence="8 9">Receptor for VEGF or VEGFC. Has a tyrosine-protein kinase activity. Combinations of multiple VEGF receptors are required for development of different blood vessel types in the embryo. Involved in angiogenesis, specifically in VEGF-induced sprouting of new blood vessels. Particularly involved in artery formation. Does not appear to be required for hematopoiesis.</text>
</comment>
<comment type="catalytic activity">
    <reaction evidence="6">
        <text>L-tyrosyl-[protein] + ATP = O-phospho-L-tyrosyl-[protein] + ADP + H(+)</text>
        <dbReference type="Rhea" id="RHEA:10596"/>
        <dbReference type="Rhea" id="RHEA-COMP:10136"/>
        <dbReference type="Rhea" id="RHEA-COMP:20101"/>
        <dbReference type="ChEBI" id="CHEBI:15378"/>
        <dbReference type="ChEBI" id="CHEBI:30616"/>
        <dbReference type="ChEBI" id="CHEBI:46858"/>
        <dbReference type="ChEBI" id="CHEBI:61978"/>
        <dbReference type="ChEBI" id="CHEBI:456216"/>
        <dbReference type="EC" id="2.7.10.1"/>
    </reaction>
</comment>
<comment type="subunit">
    <text evidence="2 9">Interacts with isoform VEGF165 of vegfaa and, to a lesser extent, with isoform VEGF171 of vegfab (PubMed:17698971). Interacts (via juxtamembrane region) with chaperone pdcl3 (via thioredoxin fold region); the interaction leads to increased vegfr2 abundance through inhibition of its ubiquitination and degradation (By similarity).</text>
</comment>
<comment type="subcellular location">
    <subcellularLocation>
        <location evidence="1">Cell membrane</location>
        <topology evidence="11">Single-pass type I membrane protein</topology>
    </subcellularLocation>
    <subcellularLocation>
        <location evidence="1">Cytoplasm</location>
    </subcellularLocation>
    <subcellularLocation>
        <location evidence="1">Nucleus</location>
    </subcellularLocation>
    <subcellularLocation>
        <location evidence="1">Cytoplasmic vesicle</location>
    </subcellularLocation>
    <subcellularLocation>
        <location evidence="1">Early endosome</location>
    </subcellularLocation>
    <subcellularLocation>
        <location evidence="1">Cell junction</location>
    </subcellularLocation>
    <subcellularLocation>
        <location evidence="2">Endoplasmic reticulum</location>
    </subcellularLocation>
</comment>
<comment type="tissue specificity">
    <text evidence="8 9 10">First expressed in embryos between 5- and 7-somites in the bilateral stripes that contain the developing angioblasts, and then localized to the intermediate cell mass (ICM) and the developing vasculature. By 30 hpf, expressed in the major trunk, head and intersomitic vessels, persisting through 4 dpf when expression is seen in developing subintestinal veins and in the remaining vasculature.</text>
</comment>
<comment type="developmental stage">
    <text evidence="10">The first vegfr expressed during development.</text>
</comment>
<comment type="similarity">
    <text evidence="5">Belongs to the protein kinase superfamily. Tyr protein kinase family. CSF-1/PDGF receptor subfamily.</text>
</comment>
<comment type="caution">
    <text evidence="11">This entry should not be confused with kdrl (AC Q8AXB3), which used to be called kdr.</text>
</comment>